<dbReference type="EMBL" id="CP000108">
    <property type="protein sequence ID" value="ABB29097.1"/>
    <property type="molecule type" value="Genomic_DNA"/>
</dbReference>
<dbReference type="SMR" id="Q3APH8"/>
<dbReference type="STRING" id="340177.Cag_1846"/>
<dbReference type="KEGG" id="cch:Cag_1846"/>
<dbReference type="eggNOG" id="COG0091">
    <property type="taxonomic scope" value="Bacteria"/>
</dbReference>
<dbReference type="HOGENOM" id="CLU_083987_3_1_10"/>
<dbReference type="OrthoDB" id="9805969at2"/>
<dbReference type="GO" id="GO:0022625">
    <property type="term" value="C:cytosolic large ribosomal subunit"/>
    <property type="evidence" value="ECO:0007669"/>
    <property type="project" value="TreeGrafter"/>
</dbReference>
<dbReference type="GO" id="GO:0019843">
    <property type="term" value="F:rRNA binding"/>
    <property type="evidence" value="ECO:0007669"/>
    <property type="project" value="UniProtKB-UniRule"/>
</dbReference>
<dbReference type="GO" id="GO:0003735">
    <property type="term" value="F:structural constituent of ribosome"/>
    <property type="evidence" value="ECO:0007669"/>
    <property type="project" value="InterPro"/>
</dbReference>
<dbReference type="GO" id="GO:0006412">
    <property type="term" value="P:translation"/>
    <property type="evidence" value="ECO:0007669"/>
    <property type="project" value="UniProtKB-UniRule"/>
</dbReference>
<dbReference type="CDD" id="cd00336">
    <property type="entry name" value="Ribosomal_L22"/>
    <property type="match status" value="1"/>
</dbReference>
<dbReference type="Gene3D" id="3.90.470.10">
    <property type="entry name" value="Ribosomal protein L22/L17"/>
    <property type="match status" value="1"/>
</dbReference>
<dbReference type="HAMAP" id="MF_01331_B">
    <property type="entry name" value="Ribosomal_uL22_B"/>
    <property type="match status" value="1"/>
</dbReference>
<dbReference type="InterPro" id="IPR001063">
    <property type="entry name" value="Ribosomal_uL22"/>
</dbReference>
<dbReference type="InterPro" id="IPR005727">
    <property type="entry name" value="Ribosomal_uL22_bac/chlpt-type"/>
</dbReference>
<dbReference type="InterPro" id="IPR047867">
    <property type="entry name" value="Ribosomal_uL22_bac/org-type"/>
</dbReference>
<dbReference type="InterPro" id="IPR036394">
    <property type="entry name" value="Ribosomal_uL22_sf"/>
</dbReference>
<dbReference type="NCBIfam" id="TIGR01044">
    <property type="entry name" value="rplV_bact"/>
    <property type="match status" value="1"/>
</dbReference>
<dbReference type="PANTHER" id="PTHR13501">
    <property type="entry name" value="CHLOROPLAST 50S RIBOSOMAL PROTEIN L22-RELATED"/>
    <property type="match status" value="1"/>
</dbReference>
<dbReference type="PANTHER" id="PTHR13501:SF8">
    <property type="entry name" value="LARGE RIBOSOMAL SUBUNIT PROTEIN UL22M"/>
    <property type="match status" value="1"/>
</dbReference>
<dbReference type="Pfam" id="PF00237">
    <property type="entry name" value="Ribosomal_L22"/>
    <property type="match status" value="1"/>
</dbReference>
<dbReference type="SUPFAM" id="SSF54843">
    <property type="entry name" value="Ribosomal protein L22"/>
    <property type="match status" value="1"/>
</dbReference>
<name>RL22_CHLCH</name>
<evidence type="ECO:0000255" key="1">
    <source>
        <dbReference type="HAMAP-Rule" id="MF_01331"/>
    </source>
</evidence>
<evidence type="ECO:0000305" key="2"/>
<reference key="1">
    <citation type="submission" date="2005-08" db="EMBL/GenBank/DDBJ databases">
        <title>Complete sequence of Chlorobium chlorochromatii CaD3.</title>
        <authorList>
            <consortium name="US DOE Joint Genome Institute"/>
            <person name="Copeland A."/>
            <person name="Lucas S."/>
            <person name="Lapidus A."/>
            <person name="Barry K."/>
            <person name="Detter J.C."/>
            <person name="Glavina T."/>
            <person name="Hammon N."/>
            <person name="Israni S."/>
            <person name="Pitluck S."/>
            <person name="Bryant D."/>
            <person name="Schmutz J."/>
            <person name="Larimer F."/>
            <person name="Land M."/>
            <person name="Kyrpides N."/>
            <person name="Ivanova N."/>
            <person name="Richardson P."/>
        </authorList>
    </citation>
    <scope>NUCLEOTIDE SEQUENCE [LARGE SCALE GENOMIC DNA]</scope>
    <source>
        <strain>CaD3</strain>
    </source>
</reference>
<comment type="function">
    <text evidence="1">This protein binds specifically to 23S rRNA; its binding is stimulated by other ribosomal proteins, e.g. L4, L17, and L20. It is important during the early stages of 50S assembly. It makes multiple contacts with different domains of the 23S rRNA in the assembled 50S subunit and ribosome (By similarity).</text>
</comment>
<comment type="function">
    <text evidence="1">The globular domain of the protein is located near the polypeptide exit tunnel on the outside of the subunit, while an extended beta-hairpin is found that lines the wall of the exit tunnel in the center of the 70S ribosome.</text>
</comment>
<comment type="subunit">
    <text evidence="1">Part of the 50S ribosomal subunit.</text>
</comment>
<comment type="similarity">
    <text evidence="1">Belongs to the universal ribosomal protein uL22 family.</text>
</comment>
<sequence>MEAKAVLRNTPTSPRKMRLVAGLVRGKQVNQAKAILLNSTKAASKNVMLTLKSAVSNYTLNNPDERVSDQELFVKAIFVDGGMTLKRTLPAPMGRAYRIRKRSNHLTIVVDKVKNPVIN</sequence>
<organism>
    <name type="scientific">Chlorobium chlorochromatii (strain CaD3)</name>
    <dbReference type="NCBI Taxonomy" id="340177"/>
    <lineage>
        <taxon>Bacteria</taxon>
        <taxon>Pseudomonadati</taxon>
        <taxon>Chlorobiota</taxon>
        <taxon>Chlorobiia</taxon>
        <taxon>Chlorobiales</taxon>
        <taxon>Chlorobiaceae</taxon>
        <taxon>Chlorobium/Pelodictyon group</taxon>
        <taxon>Chlorobium</taxon>
    </lineage>
</organism>
<accession>Q3APH8</accession>
<feature type="chain" id="PRO_0000243140" description="Large ribosomal subunit protein uL22">
    <location>
        <begin position="1"/>
        <end position="119"/>
    </location>
</feature>
<proteinExistence type="inferred from homology"/>
<gene>
    <name evidence="1" type="primary">rplV</name>
    <name type="ordered locus">Cag_1846</name>
</gene>
<protein>
    <recommendedName>
        <fullName evidence="1">Large ribosomal subunit protein uL22</fullName>
    </recommendedName>
    <alternativeName>
        <fullName evidence="2">50S ribosomal protein L22</fullName>
    </alternativeName>
</protein>
<keyword id="KW-0687">Ribonucleoprotein</keyword>
<keyword id="KW-0689">Ribosomal protein</keyword>
<keyword id="KW-0694">RNA-binding</keyword>
<keyword id="KW-0699">rRNA-binding</keyword>